<reference key="1">
    <citation type="journal article" date="2007" name="Genome Biol.">
        <title>Characterization and modeling of the Haemophilus influenzae core and supragenomes based on the complete genomic sequences of Rd and 12 clinical nontypeable strains.</title>
        <authorList>
            <person name="Hogg J.S."/>
            <person name="Hu F.Z."/>
            <person name="Janto B."/>
            <person name="Boissy R."/>
            <person name="Hayes J."/>
            <person name="Keefe R."/>
            <person name="Post J.C."/>
            <person name="Ehrlich G.D."/>
        </authorList>
    </citation>
    <scope>NUCLEOTIDE SEQUENCE [LARGE SCALE GENOMIC DNA]</scope>
    <source>
        <strain>PittEE</strain>
    </source>
</reference>
<organism>
    <name type="scientific">Haemophilus influenzae (strain PittEE)</name>
    <dbReference type="NCBI Taxonomy" id="374930"/>
    <lineage>
        <taxon>Bacteria</taxon>
        <taxon>Pseudomonadati</taxon>
        <taxon>Pseudomonadota</taxon>
        <taxon>Gammaproteobacteria</taxon>
        <taxon>Pasteurellales</taxon>
        <taxon>Pasteurellaceae</taxon>
        <taxon>Haemophilus</taxon>
    </lineage>
</organism>
<protein>
    <recommendedName>
        <fullName>Transcriptional regulator MraZ</fullName>
    </recommendedName>
</protein>
<evidence type="ECO:0000255" key="1">
    <source>
        <dbReference type="HAMAP-Rule" id="MF_01008"/>
    </source>
</evidence>
<evidence type="ECO:0000255" key="2">
    <source>
        <dbReference type="PROSITE-ProRule" id="PRU01076"/>
    </source>
</evidence>
<sequence length="151" mass="17162">MFRGATAVNLDSKGRVAIPTRYRAEILEKNQGQMVCTVDIRQSCLLLYPLDEWEKIEQKLLALSNFDPTQRRLQRVMLGHATECEMDAQGRILLSGPLRQHAKLEKGLMLVGQLNKFEIWSDVEWHTQIAEDIEIGSSTDFAADALNDFSL</sequence>
<dbReference type="EMBL" id="CP000671">
    <property type="protein sequence ID" value="ABQ98628.1"/>
    <property type="molecule type" value="Genomic_DNA"/>
</dbReference>
<dbReference type="SMR" id="A5UCX7"/>
<dbReference type="KEGG" id="hip:CGSHiEE_06405"/>
<dbReference type="HOGENOM" id="CLU_107907_2_0_6"/>
<dbReference type="GO" id="GO:0005737">
    <property type="term" value="C:cytoplasm"/>
    <property type="evidence" value="ECO:0007669"/>
    <property type="project" value="UniProtKB-UniRule"/>
</dbReference>
<dbReference type="GO" id="GO:0009295">
    <property type="term" value="C:nucleoid"/>
    <property type="evidence" value="ECO:0007669"/>
    <property type="project" value="UniProtKB-SubCell"/>
</dbReference>
<dbReference type="GO" id="GO:0003700">
    <property type="term" value="F:DNA-binding transcription factor activity"/>
    <property type="evidence" value="ECO:0007669"/>
    <property type="project" value="UniProtKB-UniRule"/>
</dbReference>
<dbReference type="GO" id="GO:0000976">
    <property type="term" value="F:transcription cis-regulatory region binding"/>
    <property type="evidence" value="ECO:0007669"/>
    <property type="project" value="TreeGrafter"/>
</dbReference>
<dbReference type="GO" id="GO:2000143">
    <property type="term" value="P:negative regulation of DNA-templated transcription initiation"/>
    <property type="evidence" value="ECO:0007669"/>
    <property type="project" value="TreeGrafter"/>
</dbReference>
<dbReference type="CDD" id="cd16321">
    <property type="entry name" value="MraZ_C"/>
    <property type="match status" value="1"/>
</dbReference>
<dbReference type="CDD" id="cd16320">
    <property type="entry name" value="MraZ_N"/>
    <property type="match status" value="1"/>
</dbReference>
<dbReference type="FunFam" id="3.40.1550.20:FF:000001">
    <property type="entry name" value="Transcriptional regulator MraZ"/>
    <property type="match status" value="1"/>
</dbReference>
<dbReference type="Gene3D" id="3.40.1550.20">
    <property type="entry name" value="Transcriptional regulator MraZ domain"/>
    <property type="match status" value="1"/>
</dbReference>
<dbReference type="HAMAP" id="MF_01008">
    <property type="entry name" value="MraZ"/>
    <property type="match status" value="1"/>
</dbReference>
<dbReference type="InterPro" id="IPR003444">
    <property type="entry name" value="MraZ"/>
</dbReference>
<dbReference type="InterPro" id="IPR035644">
    <property type="entry name" value="MraZ_C"/>
</dbReference>
<dbReference type="InterPro" id="IPR020603">
    <property type="entry name" value="MraZ_dom"/>
</dbReference>
<dbReference type="InterPro" id="IPR035642">
    <property type="entry name" value="MraZ_N"/>
</dbReference>
<dbReference type="InterPro" id="IPR038619">
    <property type="entry name" value="MraZ_sf"/>
</dbReference>
<dbReference type="InterPro" id="IPR007159">
    <property type="entry name" value="SpoVT-AbrB_dom"/>
</dbReference>
<dbReference type="InterPro" id="IPR037914">
    <property type="entry name" value="SpoVT-AbrB_sf"/>
</dbReference>
<dbReference type="NCBIfam" id="TIGR00242">
    <property type="entry name" value="division/cell wall cluster transcriptional repressor MraZ"/>
    <property type="match status" value="1"/>
</dbReference>
<dbReference type="PANTHER" id="PTHR34701">
    <property type="entry name" value="TRANSCRIPTIONAL REGULATOR MRAZ"/>
    <property type="match status" value="1"/>
</dbReference>
<dbReference type="PANTHER" id="PTHR34701:SF1">
    <property type="entry name" value="TRANSCRIPTIONAL REGULATOR MRAZ"/>
    <property type="match status" value="1"/>
</dbReference>
<dbReference type="Pfam" id="PF02381">
    <property type="entry name" value="MraZ"/>
    <property type="match status" value="2"/>
</dbReference>
<dbReference type="SUPFAM" id="SSF89447">
    <property type="entry name" value="AbrB/MazE/MraZ-like"/>
    <property type="match status" value="1"/>
</dbReference>
<dbReference type="PROSITE" id="PS51740">
    <property type="entry name" value="SPOVT_ABRB"/>
    <property type="match status" value="2"/>
</dbReference>
<gene>
    <name evidence="1" type="primary">mraZ</name>
    <name type="ordered locus">CGSHiEE_06405</name>
</gene>
<name>MRAZ_HAEIE</name>
<proteinExistence type="inferred from homology"/>
<keyword id="KW-0963">Cytoplasm</keyword>
<keyword id="KW-0238">DNA-binding</keyword>
<keyword id="KW-0677">Repeat</keyword>
<keyword id="KW-0804">Transcription</keyword>
<keyword id="KW-0805">Transcription regulation</keyword>
<accession>A5UCX7</accession>
<comment type="subunit">
    <text evidence="1">Forms oligomers.</text>
</comment>
<comment type="subcellular location">
    <subcellularLocation>
        <location evidence="1">Cytoplasm</location>
        <location evidence="1">Nucleoid</location>
    </subcellularLocation>
</comment>
<comment type="similarity">
    <text evidence="1">Belongs to the MraZ family.</text>
</comment>
<feature type="chain" id="PRO_1000062878" description="Transcriptional regulator MraZ">
    <location>
        <begin position="1"/>
        <end position="151"/>
    </location>
</feature>
<feature type="domain" description="SpoVT-AbrB 1" evidence="2">
    <location>
        <begin position="5"/>
        <end position="52"/>
    </location>
</feature>
<feature type="domain" description="SpoVT-AbrB 2" evidence="2">
    <location>
        <begin position="81"/>
        <end position="124"/>
    </location>
</feature>